<dbReference type="EMBL" id="CP000653">
    <property type="protein sequence ID" value="ABP58883.1"/>
    <property type="molecule type" value="Genomic_DNA"/>
</dbReference>
<dbReference type="RefSeq" id="WP_011915458.1">
    <property type="nucleotide sequence ID" value="NC_009436.1"/>
</dbReference>
<dbReference type="SMR" id="A4W5A3"/>
<dbReference type="STRING" id="399742.Ent638_0193"/>
<dbReference type="GeneID" id="93307372"/>
<dbReference type="KEGG" id="ent:Ent638_0193"/>
<dbReference type="eggNOG" id="COG0080">
    <property type="taxonomic scope" value="Bacteria"/>
</dbReference>
<dbReference type="HOGENOM" id="CLU_074237_2_0_6"/>
<dbReference type="OrthoDB" id="9802408at2"/>
<dbReference type="Proteomes" id="UP000000230">
    <property type="component" value="Chromosome"/>
</dbReference>
<dbReference type="GO" id="GO:0022625">
    <property type="term" value="C:cytosolic large ribosomal subunit"/>
    <property type="evidence" value="ECO:0007669"/>
    <property type="project" value="TreeGrafter"/>
</dbReference>
<dbReference type="GO" id="GO:0070180">
    <property type="term" value="F:large ribosomal subunit rRNA binding"/>
    <property type="evidence" value="ECO:0007669"/>
    <property type="project" value="UniProtKB-UniRule"/>
</dbReference>
<dbReference type="GO" id="GO:0003735">
    <property type="term" value="F:structural constituent of ribosome"/>
    <property type="evidence" value="ECO:0007669"/>
    <property type="project" value="InterPro"/>
</dbReference>
<dbReference type="GO" id="GO:0006412">
    <property type="term" value="P:translation"/>
    <property type="evidence" value="ECO:0007669"/>
    <property type="project" value="UniProtKB-UniRule"/>
</dbReference>
<dbReference type="CDD" id="cd00349">
    <property type="entry name" value="Ribosomal_L11"/>
    <property type="match status" value="1"/>
</dbReference>
<dbReference type="FunFam" id="1.10.10.250:FF:000001">
    <property type="entry name" value="50S ribosomal protein L11"/>
    <property type="match status" value="1"/>
</dbReference>
<dbReference type="FunFam" id="3.30.1550.10:FF:000001">
    <property type="entry name" value="50S ribosomal protein L11"/>
    <property type="match status" value="1"/>
</dbReference>
<dbReference type="Gene3D" id="1.10.10.250">
    <property type="entry name" value="Ribosomal protein L11, C-terminal domain"/>
    <property type="match status" value="1"/>
</dbReference>
<dbReference type="Gene3D" id="3.30.1550.10">
    <property type="entry name" value="Ribosomal protein L11/L12, N-terminal domain"/>
    <property type="match status" value="1"/>
</dbReference>
<dbReference type="HAMAP" id="MF_00736">
    <property type="entry name" value="Ribosomal_uL11"/>
    <property type="match status" value="1"/>
</dbReference>
<dbReference type="InterPro" id="IPR000911">
    <property type="entry name" value="Ribosomal_uL11"/>
</dbReference>
<dbReference type="InterPro" id="IPR006519">
    <property type="entry name" value="Ribosomal_uL11_bac-typ"/>
</dbReference>
<dbReference type="InterPro" id="IPR020783">
    <property type="entry name" value="Ribosomal_uL11_C"/>
</dbReference>
<dbReference type="InterPro" id="IPR036769">
    <property type="entry name" value="Ribosomal_uL11_C_sf"/>
</dbReference>
<dbReference type="InterPro" id="IPR020785">
    <property type="entry name" value="Ribosomal_uL11_CS"/>
</dbReference>
<dbReference type="InterPro" id="IPR020784">
    <property type="entry name" value="Ribosomal_uL11_N"/>
</dbReference>
<dbReference type="InterPro" id="IPR036796">
    <property type="entry name" value="Ribosomal_uL11_N_sf"/>
</dbReference>
<dbReference type="NCBIfam" id="TIGR01632">
    <property type="entry name" value="L11_bact"/>
    <property type="match status" value="1"/>
</dbReference>
<dbReference type="PANTHER" id="PTHR11661">
    <property type="entry name" value="60S RIBOSOMAL PROTEIN L12"/>
    <property type="match status" value="1"/>
</dbReference>
<dbReference type="PANTHER" id="PTHR11661:SF1">
    <property type="entry name" value="LARGE RIBOSOMAL SUBUNIT PROTEIN UL11M"/>
    <property type="match status" value="1"/>
</dbReference>
<dbReference type="Pfam" id="PF00298">
    <property type="entry name" value="Ribosomal_L11"/>
    <property type="match status" value="1"/>
</dbReference>
<dbReference type="Pfam" id="PF03946">
    <property type="entry name" value="Ribosomal_L11_N"/>
    <property type="match status" value="1"/>
</dbReference>
<dbReference type="SMART" id="SM00649">
    <property type="entry name" value="RL11"/>
    <property type="match status" value="1"/>
</dbReference>
<dbReference type="SUPFAM" id="SSF54747">
    <property type="entry name" value="Ribosomal L11/L12e N-terminal domain"/>
    <property type="match status" value="1"/>
</dbReference>
<dbReference type="SUPFAM" id="SSF46906">
    <property type="entry name" value="Ribosomal protein L11, C-terminal domain"/>
    <property type="match status" value="1"/>
</dbReference>
<dbReference type="PROSITE" id="PS00359">
    <property type="entry name" value="RIBOSOMAL_L11"/>
    <property type="match status" value="1"/>
</dbReference>
<proteinExistence type="inferred from homology"/>
<sequence length="142" mass="14937">MAKKVQAYVKLQVAAGMANPSPPVGPALGQQGVNIMEFCKAFNAKTESLEKGLPTPVVITVYADRSFTFITKTPPAAVLLKKAAGIKSGSGKPNKDKVGKISRTQLQEIAQTKAADMTGSDIEAMTRSIEGTARSMGLVVED</sequence>
<organism>
    <name type="scientific">Enterobacter sp. (strain 638)</name>
    <dbReference type="NCBI Taxonomy" id="399742"/>
    <lineage>
        <taxon>Bacteria</taxon>
        <taxon>Pseudomonadati</taxon>
        <taxon>Pseudomonadota</taxon>
        <taxon>Gammaproteobacteria</taxon>
        <taxon>Enterobacterales</taxon>
        <taxon>Enterobacteriaceae</taxon>
        <taxon>Enterobacter</taxon>
    </lineage>
</organism>
<feature type="chain" id="PRO_1000062136" description="Large ribosomal subunit protein uL11">
    <location>
        <begin position="1"/>
        <end position="142"/>
    </location>
</feature>
<gene>
    <name evidence="1" type="primary">rplK</name>
    <name type="ordered locus">Ent638_0193</name>
</gene>
<accession>A4W5A3</accession>
<evidence type="ECO:0000255" key="1">
    <source>
        <dbReference type="HAMAP-Rule" id="MF_00736"/>
    </source>
</evidence>
<evidence type="ECO:0000305" key="2"/>
<comment type="function">
    <text evidence="1">Forms part of the ribosomal stalk which helps the ribosome interact with GTP-bound translation factors.</text>
</comment>
<comment type="subunit">
    <text evidence="1">Part of the ribosomal stalk of the 50S ribosomal subunit. Interacts with L10 and the large rRNA to form the base of the stalk. L10 forms an elongated spine to which L12 dimers bind in a sequential fashion forming a multimeric L10(L12)X complex.</text>
</comment>
<comment type="PTM">
    <text evidence="1">One or more lysine residues are methylated.</text>
</comment>
<comment type="similarity">
    <text evidence="1">Belongs to the universal ribosomal protein uL11 family.</text>
</comment>
<keyword id="KW-0488">Methylation</keyword>
<keyword id="KW-0687">Ribonucleoprotein</keyword>
<keyword id="KW-0689">Ribosomal protein</keyword>
<keyword id="KW-0694">RNA-binding</keyword>
<keyword id="KW-0699">rRNA-binding</keyword>
<name>RL11_ENT38</name>
<reference key="1">
    <citation type="journal article" date="2010" name="PLoS Genet.">
        <title>Genome sequence of the plant growth promoting endophytic bacterium Enterobacter sp. 638.</title>
        <authorList>
            <person name="Taghavi S."/>
            <person name="van der Lelie D."/>
            <person name="Hoffman A."/>
            <person name="Zhang Y.B."/>
            <person name="Walla M.D."/>
            <person name="Vangronsveld J."/>
            <person name="Newman L."/>
            <person name="Monchy S."/>
        </authorList>
    </citation>
    <scope>NUCLEOTIDE SEQUENCE [LARGE SCALE GENOMIC DNA]</scope>
    <source>
        <strain>638</strain>
    </source>
</reference>
<protein>
    <recommendedName>
        <fullName evidence="1">Large ribosomal subunit protein uL11</fullName>
    </recommendedName>
    <alternativeName>
        <fullName evidence="2">50S ribosomal protein L11</fullName>
    </alternativeName>
</protein>